<dbReference type="EMBL" id="AJ296024">
    <property type="protein sequence ID" value="CAC14429.1"/>
    <property type="molecule type" value="mRNA"/>
</dbReference>
<dbReference type="EMBL" id="AC004557">
    <property type="protein sequence ID" value="AAF99745.1"/>
    <property type="status" value="ALT_SEQ"/>
    <property type="molecule type" value="Genomic_DNA"/>
</dbReference>
<dbReference type="EMBL" id="CP002684">
    <property type="protein sequence ID" value="AEE30824.1"/>
    <property type="molecule type" value="Genomic_DNA"/>
</dbReference>
<dbReference type="EMBL" id="AK228213">
    <property type="protein sequence ID" value="BAF00166.1"/>
    <property type="molecule type" value="mRNA"/>
</dbReference>
<dbReference type="EMBL" id="BT024602">
    <property type="protein sequence ID" value="ABD43000.1"/>
    <property type="molecule type" value="mRNA"/>
</dbReference>
<dbReference type="PIR" id="D86399">
    <property type="entry name" value="D86399"/>
</dbReference>
<dbReference type="RefSeq" id="NP_174059.2">
    <property type="nucleotide sequence ID" value="NM_102502.3"/>
</dbReference>
<dbReference type="SMR" id="P82873"/>
<dbReference type="BioGRID" id="24864">
    <property type="interactions" value="6"/>
</dbReference>
<dbReference type="FunCoup" id="P82873">
    <property type="interactions" value="888"/>
</dbReference>
<dbReference type="IntAct" id="P82873">
    <property type="interactions" value="5"/>
</dbReference>
<dbReference type="MINT" id="P82873"/>
<dbReference type="STRING" id="3702.P82873"/>
<dbReference type="iPTMnet" id="P82873"/>
<dbReference type="MetOSite" id="P82873"/>
<dbReference type="PaxDb" id="3702-AT1G27390.1"/>
<dbReference type="ProteomicsDB" id="234310"/>
<dbReference type="EnsemblPlants" id="AT1G27390.1">
    <property type="protein sequence ID" value="AT1G27390.1"/>
    <property type="gene ID" value="AT1G27390"/>
</dbReference>
<dbReference type="GeneID" id="839629"/>
<dbReference type="Gramene" id="AT1G27390.1">
    <property type="protein sequence ID" value="AT1G27390.1"/>
    <property type="gene ID" value="AT1G27390"/>
</dbReference>
<dbReference type="KEGG" id="ath:AT1G27390"/>
<dbReference type="Araport" id="AT1G27390"/>
<dbReference type="TAIR" id="AT1G27390">
    <property type="gene designation" value="TOM20-2"/>
</dbReference>
<dbReference type="eggNOG" id="ENOG502QT42">
    <property type="taxonomic scope" value="Eukaryota"/>
</dbReference>
<dbReference type="HOGENOM" id="CLU_117357_0_0_1"/>
<dbReference type="InParanoid" id="P82873"/>
<dbReference type="OMA" id="HNALWCL"/>
<dbReference type="OrthoDB" id="1056333at2759"/>
<dbReference type="PhylomeDB" id="P82873"/>
<dbReference type="PRO" id="PR:P82873"/>
<dbReference type="Proteomes" id="UP000006548">
    <property type="component" value="Chromosome 1"/>
</dbReference>
<dbReference type="ExpressionAtlas" id="P82873">
    <property type="expression patterns" value="baseline and differential"/>
</dbReference>
<dbReference type="GO" id="GO:0022626">
    <property type="term" value="C:cytosolic ribosome"/>
    <property type="evidence" value="ECO:0007005"/>
    <property type="project" value="TAIR"/>
</dbReference>
<dbReference type="GO" id="GO:0005743">
    <property type="term" value="C:mitochondrial inner membrane"/>
    <property type="evidence" value="ECO:0007005"/>
    <property type="project" value="TAIR"/>
</dbReference>
<dbReference type="GO" id="GO:0005741">
    <property type="term" value="C:mitochondrial outer membrane"/>
    <property type="evidence" value="ECO:0000314"/>
    <property type="project" value="UniProtKB"/>
</dbReference>
<dbReference type="GO" id="GO:0005742">
    <property type="term" value="C:mitochondrial outer membrane translocase complex"/>
    <property type="evidence" value="ECO:0000314"/>
    <property type="project" value="TAIR"/>
</dbReference>
<dbReference type="GO" id="GO:0005739">
    <property type="term" value="C:mitochondrion"/>
    <property type="evidence" value="ECO:0000314"/>
    <property type="project" value="TAIR"/>
</dbReference>
<dbReference type="GO" id="GO:0005634">
    <property type="term" value="C:nucleus"/>
    <property type="evidence" value="ECO:0007005"/>
    <property type="project" value="TAIR"/>
</dbReference>
<dbReference type="GO" id="GO:0005744">
    <property type="term" value="C:TIM23 mitochondrial import inner membrane translocase complex"/>
    <property type="evidence" value="ECO:0000304"/>
    <property type="project" value="TAIR"/>
</dbReference>
<dbReference type="GO" id="GO:0046872">
    <property type="term" value="F:metal ion binding"/>
    <property type="evidence" value="ECO:0000314"/>
    <property type="project" value="TAIR"/>
</dbReference>
<dbReference type="GO" id="GO:0015450">
    <property type="term" value="F:protein-transporting ATPase activity"/>
    <property type="evidence" value="ECO:0000304"/>
    <property type="project" value="TAIR"/>
</dbReference>
<dbReference type="GO" id="GO:0045040">
    <property type="term" value="P:protein insertion into mitochondrial outer membrane"/>
    <property type="evidence" value="ECO:0007669"/>
    <property type="project" value="InterPro"/>
</dbReference>
<dbReference type="GO" id="GO:0006626">
    <property type="term" value="P:protein targeting to mitochondrion"/>
    <property type="evidence" value="ECO:0000315"/>
    <property type="project" value="TAIR"/>
</dbReference>
<dbReference type="FunFam" id="1.25.40.10:FF:001599">
    <property type="entry name" value="Mitochondrial import receptor subunit TOM20-3"/>
    <property type="match status" value="1"/>
</dbReference>
<dbReference type="Gene3D" id="1.25.40.10">
    <property type="entry name" value="Tetratricopeptide repeat domain"/>
    <property type="match status" value="1"/>
</dbReference>
<dbReference type="InterPro" id="IPR010547">
    <property type="entry name" value="TOM20_imprt_rcpt"/>
</dbReference>
<dbReference type="InterPro" id="IPR011990">
    <property type="entry name" value="TPR-like_helical_dom_sf"/>
</dbReference>
<dbReference type="PANTHER" id="PTHR32409">
    <property type="entry name" value="MITOCHONDRIAL IMPORT RECEPTOR SUBUNIT TOM20-1-RELATED"/>
    <property type="match status" value="1"/>
</dbReference>
<dbReference type="PANTHER" id="PTHR32409:SF13">
    <property type="entry name" value="MITOCHONDRIAL IMPORT RECEPTOR SUBUNIT TOM20-2"/>
    <property type="match status" value="1"/>
</dbReference>
<dbReference type="Pfam" id="PF06552">
    <property type="entry name" value="TOM20_plant"/>
    <property type="match status" value="1"/>
</dbReference>
<dbReference type="SUPFAM" id="SSF48452">
    <property type="entry name" value="TPR-like"/>
    <property type="match status" value="1"/>
</dbReference>
<reference key="1">
    <citation type="journal article" date="2001" name="Plant Physiol.">
        <title>Purification and characterization of the preprotein translocase of the outer mitochondrial membrane from Arabidopsis. Identification of multiple forms of TOM20.</title>
        <authorList>
            <person name="Werhahn W."/>
            <person name="Niemeyer A."/>
            <person name="Jaensch L."/>
            <person name="Kruft V."/>
            <person name="Schmitz U.K."/>
            <person name="Braun H.-P."/>
        </authorList>
    </citation>
    <scope>NUCLEOTIDE SEQUENCE [MRNA]</scope>
    <scope>PROTEIN SEQUENCE OF 37-48; 105-114 AND 132-147</scope>
    <source>
        <strain>cv. Columbia</strain>
    </source>
</reference>
<reference key="2">
    <citation type="journal article" date="2000" name="Nature">
        <title>Sequence and analysis of chromosome 1 of the plant Arabidopsis thaliana.</title>
        <authorList>
            <person name="Theologis A."/>
            <person name="Ecker J.R."/>
            <person name="Palm C.J."/>
            <person name="Federspiel N.A."/>
            <person name="Kaul S."/>
            <person name="White O."/>
            <person name="Alonso J."/>
            <person name="Altafi H."/>
            <person name="Araujo R."/>
            <person name="Bowman C.L."/>
            <person name="Brooks S.Y."/>
            <person name="Buehler E."/>
            <person name="Chan A."/>
            <person name="Chao Q."/>
            <person name="Chen H."/>
            <person name="Cheuk R.F."/>
            <person name="Chin C.W."/>
            <person name="Chung M.K."/>
            <person name="Conn L."/>
            <person name="Conway A.B."/>
            <person name="Conway A.R."/>
            <person name="Creasy T.H."/>
            <person name="Dewar K."/>
            <person name="Dunn P."/>
            <person name="Etgu P."/>
            <person name="Feldblyum T.V."/>
            <person name="Feng J.-D."/>
            <person name="Fong B."/>
            <person name="Fujii C.Y."/>
            <person name="Gill J.E."/>
            <person name="Goldsmith A.D."/>
            <person name="Haas B."/>
            <person name="Hansen N.F."/>
            <person name="Hughes B."/>
            <person name="Huizar L."/>
            <person name="Hunter J.L."/>
            <person name="Jenkins J."/>
            <person name="Johnson-Hopson C."/>
            <person name="Khan S."/>
            <person name="Khaykin E."/>
            <person name="Kim C.J."/>
            <person name="Koo H.L."/>
            <person name="Kremenetskaia I."/>
            <person name="Kurtz D.B."/>
            <person name="Kwan A."/>
            <person name="Lam B."/>
            <person name="Langin-Hooper S."/>
            <person name="Lee A."/>
            <person name="Lee J.M."/>
            <person name="Lenz C.A."/>
            <person name="Li J.H."/>
            <person name="Li Y.-P."/>
            <person name="Lin X."/>
            <person name="Liu S.X."/>
            <person name="Liu Z.A."/>
            <person name="Luros J.S."/>
            <person name="Maiti R."/>
            <person name="Marziali A."/>
            <person name="Militscher J."/>
            <person name="Miranda M."/>
            <person name="Nguyen M."/>
            <person name="Nierman W.C."/>
            <person name="Osborne B.I."/>
            <person name="Pai G."/>
            <person name="Peterson J."/>
            <person name="Pham P.K."/>
            <person name="Rizzo M."/>
            <person name="Rooney T."/>
            <person name="Rowley D."/>
            <person name="Sakano H."/>
            <person name="Salzberg S.L."/>
            <person name="Schwartz J.R."/>
            <person name="Shinn P."/>
            <person name="Southwick A.M."/>
            <person name="Sun H."/>
            <person name="Tallon L.J."/>
            <person name="Tambunga G."/>
            <person name="Toriumi M.J."/>
            <person name="Town C.D."/>
            <person name="Utterback T."/>
            <person name="Van Aken S."/>
            <person name="Vaysberg M."/>
            <person name="Vysotskaia V.S."/>
            <person name="Walker M."/>
            <person name="Wu D."/>
            <person name="Yu G."/>
            <person name="Fraser C.M."/>
            <person name="Venter J.C."/>
            <person name="Davis R.W."/>
        </authorList>
    </citation>
    <scope>NUCLEOTIDE SEQUENCE [LARGE SCALE GENOMIC DNA]</scope>
    <source>
        <strain>cv. Columbia</strain>
    </source>
</reference>
<reference key="3">
    <citation type="journal article" date="2017" name="Plant J.">
        <title>Araport11: a complete reannotation of the Arabidopsis thaliana reference genome.</title>
        <authorList>
            <person name="Cheng C.Y."/>
            <person name="Krishnakumar V."/>
            <person name="Chan A.P."/>
            <person name="Thibaud-Nissen F."/>
            <person name="Schobel S."/>
            <person name="Town C.D."/>
        </authorList>
    </citation>
    <scope>GENOME REANNOTATION</scope>
    <source>
        <strain>cv. Columbia</strain>
    </source>
</reference>
<reference key="4">
    <citation type="submission" date="2006-07" db="EMBL/GenBank/DDBJ databases">
        <title>Large-scale analysis of RIKEN Arabidopsis full-length (RAFL) cDNAs.</title>
        <authorList>
            <person name="Totoki Y."/>
            <person name="Seki M."/>
            <person name="Ishida J."/>
            <person name="Nakajima M."/>
            <person name="Enju A."/>
            <person name="Kamiya A."/>
            <person name="Narusaka M."/>
            <person name="Shin-i T."/>
            <person name="Nakagawa M."/>
            <person name="Sakamoto N."/>
            <person name="Oishi K."/>
            <person name="Kohara Y."/>
            <person name="Kobayashi M."/>
            <person name="Toyoda A."/>
            <person name="Sakaki Y."/>
            <person name="Sakurai T."/>
            <person name="Iida K."/>
            <person name="Akiyama K."/>
            <person name="Satou M."/>
            <person name="Toyoda T."/>
            <person name="Konagaya A."/>
            <person name="Carninci P."/>
            <person name="Kawai J."/>
            <person name="Hayashizaki Y."/>
            <person name="Shinozaki K."/>
        </authorList>
    </citation>
    <scope>NUCLEOTIDE SEQUENCE [LARGE SCALE MRNA]</scope>
    <source>
        <strain>cv. Columbia</strain>
    </source>
</reference>
<reference key="5">
    <citation type="submission" date="2006-02" db="EMBL/GenBank/DDBJ databases">
        <title>Arabidopsis ORF clones.</title>
        <authorList>
            <person name="Shinn P."/>
            <person name="Chen H."/>
            <person name="Kim C.J."/>
            <person name="Ecker J.R."/>
        </authorList>
    </citation>
    <scope>NUCLEOTIDE SEQUENCE [LARGE SCALE MRNA]</scope>
    <source>
        <strain>cv. Columbia</strain>
    </source>
</reference>
<reference key="6">
    <citation type="journal article" date="2003" name="Plant Physiol. Biochem.">
        <title>Identification of novel subunits of the TOM complex from Arabidopsis thaliana.</title>
        <authorList>
            <person name="Werhahn W."/>
            <person name="Jaensch L."/>
            <person name="Braun H.-P."/>
        </authorList>
    </citation>
    <scope>SUBUNIT</scope>
</reference>
<reference key="7">
    <citation type="journal article" date="2004" name="Plant Cell">
        <title>Experimental analysis of the Arabidopsis mitochondrial proteome highlights signaling and regulatory components, provides assessment of targeting prediction programs, and indicates plant-specific mitochondrial proteins.</title>
        <authorList>
            <person name="Heazlewood J.L."/>
            <person name="Tonti-Filippini J.S."/>
            <person name="Gout A.M."/>
            <person name="Day D.A."/>
            <person name="Whelan J."/>
            <person name="Millar A.H."/>
        </authorList>
    </citation>
    <scope>IDENTIFICATION BY MASS SPECTROMETRY</scope>
    <scope>SUBCELLULAR LOCATION [LARGE SCALE ANALYSIS]</scope>
    <source>
        <strain>cv. Landsberg erecta</strain>
    </source>
</reference>
<reference key="8">
    <citation type="journal article" date="2004" name="Plant Physiol.">
        <title>A transcriptomic and proteomic characterization of the Arabidopsis mitochondrial protein import apparatus and its response to mitochondrial dysfunction.</title>
        <authorList>
            <person name="Lister R."/>
            <person name="Chew O."/>
            <person name="Lee M.N."/>
            <person name="Heazlewood J.L."/>
            <person name="Clifton R."/>
            <person name="Parker K.L."/>
            <person name="Millar A.H."/>
            <person name="Whelan J."/>
        </authorList>
    </citation>
    <scope>TISSUE SPECIFICITY</scope>
    <scope>SUBCELLULAR LOCATION</scope>
    <scope>IDENTIFICATION BY MASS SPECTROMETRY</scope>
</reference>
<reference key="9">
    <citation type="journal article" date="2007" name="Plant Cell">
        <title>Functional definition of outer membrane proteins involved in preprotein import into mitochondria.</title>
        <authorList>
            <person name="Lister R."/>
            <person name="Carrie C."/>
            <person name="Duncan O."/>
            <person name="Ho L.H."/>
            <person name="Howell K.A."/>
            <person name="Murcha M.W."/>
            <person name="Whelan J."/>
        </authorList>
    </citation>
    <scope>FUNCTION</scope>
    <scope>DISRUPTION PHENOTYPE</scope>
    <scope>SUBUNIT</scope>
    <scope>SUBCELLULAR LOCATION</scope>
</reference>
<reference key="10">
    <citation type="journal article" date="2012" name="Mol. Cell. Proteomics">
        <title>Comparative large-scale characterisation of plant vs. mammal proteins reveals similar and idiosyncratic N-alpha acetylation features.</title>
        <authorList>
            <person name="Bienvenut W.V."/>
            <person name="Sumpton D."/>
            <person name="Martinez A."/>
            <person name="Lilla S."/>
            <person name="Espagne C."/>
            <person name="Meinnel T."/>
            <person name="Giglione C."/>
        </authorList>
    </citation>
    <scope>ACETYLATION [LARGE SCALE ANALYSIS] AT MET-1</scope>
    <scope>IDENTIFICATION BY MASS SPECTROMETRY [LARGE SCALE ANALYSIS]</scope>
</reference>
<reference key="11">
    <citation type="journal article" date="2019" name="Plant Cell">
        <title>Arabidopsis DGD1 SUPPRESSOR1 is a subunit of the mitochondrial contact site and cristae organizing system and affects mitochondrial biogenesis.</title>
        <authorList>
            <person name="Li L."/>
            <person name="Lavell A."/>
            <person name="Meng X."/>
            <person name="Berkowitz O."/>
            <person name="Selinski J."/>
            <person name="van de Meene A."/>
            <person name="Carrie C."/>
            <person name="Benning C."/>
            <person name="Whelan J."/>
            <person name="De Clercq I."/>
            <person name="Wang Y."/>
        </authorList>
    </citation>
    <scope>SUBUNIT</scope>
    <scope>SUBCELLULAR LOCATION</scope>
    <source>
        <strain>cv. Columbia</strain>
    </source>
</reference>
<keyword id="KW-0007">Acetylation</keyword>
<keyword id="KW-0903">Direct protein sequencing</keyword>
<keyword id="KW-0472">Membrane</keyword>
<keyword id="KW-0496">Mitochondrion</keyword>
<keyword id="KW-1000">Mitochondrion outer membrane</keyword>
<keyword id="KW-0653">Protein transport</keyword>
<keyword id="KW-1185">Reference proteome</keyword>
<keyword id="KW-0677">Repeat</keyword>
<keyword id="KW-0802">TPR repeat</keyword>
<keyword id="KW-0812">Transmembrane</keyword>
<keyword id="KW-1133">Transmembrane helix</keyword>
<keyword id="KW-0813">Transport</keyword>
<evidence type="ECO:0000255" key="1"/>
<evidence type="ECO:0000256" key="2">
    <source>
        <dbReference type="SAM" id="MobiDB-lite"/>
    </source>
</evidence>
<evidence type="ECO:0000269" key="3">
    <source>
    </source>
</evidence>
<evidence type="ECO:0000269" key="4">
    <source>
    </source>
</evidence>
<evidence type="ECO:0000269" key="5">
    <source>
    </source>
</evidence>
<evidence type="ECO:0000269" key="6">
    <source>
    </source>
</evidence>
<evidence type="ECO:0000269" key="7">
    <source ref="6"/>
</evidence>
<evidence type="ECO:0000303" key="8">
    <source>
    </source>
</evidence>
<evidence type="ECO:0000305" key="9"/>
<evidence type="ECO:0000312" key="10">
    <source>
        <dbReference type="Araport" id="AT1G27390"/>
    </source>
</evidence>
<evidence type="ECO:0000312" key="11">
    <source>
        <dbReference type="EMBL" id="AAF99745.1"/>
    </source>
</evidence>
<evidence type="ECO:0007744" key="12">
    <source>
    </source>
</evidence>
<proteinExistence type="evidence at protein level"/>
<comment type="function">
    <text evidence="5">Central component of the receptor complex responsible for the recognition and translocation of cytosolically synthesized mitochondrial preproteins. Together with TOM22 functions as the transit peptide receptor at the surface of the mitochondrion outer membrane and facilitates the movement of preproteins into the translocation pore.</text>
</comment>
<comment type="subunit">
    <text evidence="5 6 7">Forms part of the preprotein translocase complex of the outer mitochondrial membrane (TOM complex) which consists of at least 6 different proteins (TOM5, TOM6, TOM7, TOM20, TOM22/TOM9 and TOM40) (PubMed:17981999, Ref.6). Component of a mitochondrial large protein complex that contains, at least, MIC60, DGS1, TOM40, TOM20 proteins, and petC/RISP (PubMed:31118221).</text>
</comment>
<comment type="subcellular location">
    <subcellularLocation>
        <location evidence="3 4 5 6">Mitochondrion outer membrane</location>
        <topology evidence="3 4 5">Single-pass membrane protein</topology>
    </subcellularLocation>
</comment>
<comment type="tissue specificity">
    <text evidence="4">Expressed in roots, flowers, young cotyledons and leaves.</text>
</comment>
<comment type="PTM">
    <text>The N-terminus is blocked.</text>
</comment>
<comment type="disruption phenotype">
    <text evidence="5">Slightly delayed flowering time. Triple mutants tom20-2-tom20-3-tom20-4 are viable.</text>
</comment>
<comment type="miscellaneous">
    <text>There are four genes (TOM20-1, TOM20-2, TOM20-3 and TOM20-4) which encode mitochondrial import receptor subunits TOM20.</text>
</comment>
<comment type="miscellaneous">
    <text>In mammals and fungi, the transmembrane domain is located at the N-terminus while it is located at the C-terminus in plants. The overall orientation of the protein in the membrane is therefore inverted.</text>
</comment>
<comment type="similarity">
    <text evidence="9">Belongs to the Tom20 family.</text>
</comment>
<comment type="sequence caution" evidence="9">
    <conflict type="erroneous gene model prediction">
        <sequence resource="EMBL-CDS" id="AAF99745"/>
    </conflict>
</comment>
<accession>P82873</accession>
<accession>Q2HIH9</accession>
<accession>Q9FZJ6</accession>
<name>TO202_ARATH</name>
<sequence length="210" mass="23170">MEFSTADFERLIMFEHARKNSEAQYKNDPLDSENLLKWGGALLELSQFQPIPEAKLMLNDAISKLEEALTINPGKHQALWCIANAYTAHAFYVHDPEEAKEHFDKATEYFQRAENEDPGNDTYRKSLDSSLKAPELHMQFMNQGMGQQILGGGGGGGGGGMASSNVSQSSKKKKRNTEFTYDVCGWIILACGIVAWVGMAKSLGPPPPAR</sequence>
<feature type="chain" id="PRO_0000051544" description="Mitochondrial import receptor subunit TOM20-2">
    <location>
        <begin position="1"/>
        <end position="210"/>
    </location>
</feature>
<feature type="topological domain" description="Cytoplasmic" evidence="1">
    <location>
        <begin position="1"/>
        <end position="178"/>
    </location>
</feature>
<feature type="transmembrane region" description="Helical" evidence="1">
    <location>
        <begin position="179"/>
        <end position="199"/>
    </location>
</feature>
<feature type="topological domain" description="Mitochondrial intermembrane" evidence="1">
    <location>
        <begin position="200"/>
        <end position="210"/>
    </location>
</feature>
<feature type="repeat" description="TPR 1">
    <location>
        <begin position="42"/>
        <end position="75"/>
    </location>
</feature>
<feature type="repeat" description="TPR 2">
    <location>
        <begin position="83"/>
        <end position="120"/>
    </location>
</feature>
<feature type="region of interest" description="Disordered" evidence="2">
    <location>
        <begin position="151"/>
        <end position="172"/>
    </location>
</feature>
<feature type="compositionally biased region" description="Gly residues" evidence="2">
    <location>
        <begin position="151"/>
        <end position="161"/>
    </location>
</feature>
<feature type="modified residue" description="N-acetylmethionine" evidence="12">
    <location>
        <position position="1"/>
    </location>
</feature>
<feature type="sequence conflict" description="In Ref. 1; CAC14429." evidence="9" ref="1">
    <original>L</original>
    <variation>F</variation>
    <location>
        <position position="11"/>
    </location>
</feature>
<organism>
    <name type="scientific">Arabidopsis thaliana</name>
    <name type="common">Mouse-ear cress</name>
    <dbReference type="NCBI Taxonomy" id="3702"/>
    <lineage>
        <taxon>Eukaryota</taxon>
        <taxon>Viridiplantae</taxon>
        <taxon>Streptophyta</taxon>
        <taxon>Embryophyta</taxon>
        <taxon>Tracheophyta</taxon>
        <taxon>Spermatophyta</taxon>
        <taxon>Magnoliopsida</taxon>
        <taxon>eudicotyledons</taxon>
        <taxon>Gunneridae</taxon>
        <taxon>Pentapetalae</taxon>
        <taxon>rosids</taxon>
        <taxon>malvids</taxon>
        <taxon>Brassicales</taxon>
        <taxon>Brassicaceae</taxon>
        <taxon>Camelineae</taxon>
        <taxon>Arabidopsis</taxon>
    </lineage>
</organism>
<protein>
    <recommendedName>
        <fullName evidence="8">Mitochondrial import receptor subunit TOM20-2</fullName>
    </recommendedName>
    <alternativeName>
        <fullName evidence="8">Translocase of outer membrane 20 kDa subunit 2</fullName>
    </alternativeName>
</protein>
<gene>
    <name evidence="8" type="primary">TOM20-2</name>
    <name evidence="10" type="ordered locus">At1g27390</name>
    <name evidence="11" type="ORF">F17L21.18</name>
</gene>